<proteinExistence type="inferred from homology"/>
<feature type="peptide" id="PRO_0000044007" description="thr operon leader peptide">
    <location>
        <begin position="1"/>
        <end position="21"/>
    </location>
</feature>
<accession>P0AD86</accession>
<accession>P03059</accession>
<accession>Q2MCI0</accession>
<accession>Q6LEL1</accession>
<sequence length="21" mass="2138">MKRISTTITTTITITTGNGAG</sequence>
<comment type="function">
    <text>This protein is involved in control of the biosynthesis of threonine.</text>
</comment>
<comment type="similarity">
    <text evidence="1">Belongs to the thr operon leader peptide family.</text>
</comment>
<keyword id="KW-0028">Amino-acid biosynthesis</keyword>
<keyword id="KW-0428">Leader peptide</keyword>
<keyword id="KW-1185">Reference proteome</keyword>
<keyword id="KW-0791">Threonine biosynthesis</keyword>
<gene>
    <name evidence="1" type="primary">thrL</name>
    <name type="ordered locus">b0001</name>
    <name type="ordered locus">JW4367</name>
</gene>
<name>LPT_ECOLI</name>
<dbReference type="EMBL" id="J01706">
    <property type="protein sequence ID" value="AAA83913.1"/>
    <property type="molecule type" value="Genomic_DNA"/>
</dbReference>
<dbReference type="EMBL" id="V00360">
    <property type="protein sequence ID" value="CAA23658.1"/>
    <property type="molecule type" value="Genomic_DNA"/>
</dbReference>
<dbReference type="EMBL" id="X68872">
    <property type="protein sequence ID" value="CAA48733.1"/>
    <property type="molecule type" value="Genomic_DNA"/>
</dbReference>
<dbReference type="EMBL" id="M28570">
    <property type="protein sequence ID" value="AAA24672.1"/>
    <property type="molecule type" value="Genomic_DNA"/>
</dbReference>
<dbReference type="EMBL" id="U14003">
    <property type="protein sequence ID" value="AAA97300.1"/>
    <property type="molecule type" value="Genomic_DNA"/>
</dbReference>
<dbReference type="EMBL" id="U00096">
    <property type="protein sequence ID" value="AAC73112.1"/>
    <property type="molecule type" value="Genomic_DNA"/>
</dbReference>
<dbReference type="EMBL" id="AP009048">
    <property type="protein sequence ID" value="BAE76026.1"/>
    <property type="molecule type" value="Genomic_DNA"/>
</dbReference>
<dbReference type="PIR" id="A03595">
    <property type="entry name" value="LFECT"/>
</dbReference>
<dbReference type="RefSeq" id="NP_414542.1">
    <property type="nucleotide sequence ID" value="NC_000913.3"/>
</dbReference>
<dbReference type="RefSeq" id="WP_001386572.1">
    <property type="nucleotide sequence ID" value="NZ_STEB01000033.1"/>
</dbReference>
<dbReference type="BioGRID" id="4261932">
    <property type="interactions" value="4"/>
</dbReference>
<dbReference type="FunCoup" id="P0AD86">
    <property type="interactions" value="4"/>
</dbReference>
<dbReference type="STRING" id="511145.b0001"/>
<dbReference type="PaxDb" id="511145-b0001"/>
<dbReference type="EnsemblBacteria" id="AAC73112">
    <property type="protein sequence ID" value="AAC73112"/>
    <property type="gene ID" value="b0001"/>
</dbReference>
<dbReference type="GeneID" id="93777441"/>
<dbReference type="GeneID" id="944742"/>
<dbReference type="KEGG" id="ecj:JW4367"/>
<dbReference type="KEGG" id="eco:b0001"/>
<dbReference type="KEGG" id="ecoc:C3026_00005"/>
<dbReference type="EchoBASE" id="EB1255"/>
<dbReference type="HOGENOM" id="CLU_221491_0_1_6"/>
<dbReference type="InParanoid" id="P0AD86"/>
<dbReference type="BioCyc" id="EcoCyc:EG11277-MONOMER"/>
<dbReference type="PRO" id="PR:P0AD86"/>
<dbReference type="Proteomes" id="UP000000625">
    <property type="component" value="Chromosome"/>
</dbReference>
<dbReference type="GO" id="GO:0009088">
    <property type="term" value="P:threonine biosynthetic process"/>
    <property type="evidence" value="ECO:0007669"/>
    <property type="project" value="UniProtKB-UniRule"/>
</dbReference>
<dbReference type="GO" id="GO:0031555">
    <property type="term" value="P:transcriptional attenuation"/>
    <property type="evidence" value="ECO:0000315"/>
    <property type="project" value="EcoCyc"/>
</dbReference>
<dbReference type="GO" id="GO:0031556">
    <property type="term" value="P:transcriptional attenuation by ribosome"/>
    <property type="evidence" value="ECO:0007669"/>
    <property type="project" value="UniProtKB-UniRule"/>
</dbReference>
<dbReference type="HAMAP" id="MF_01907">
    <property type="entry name" value="Leader_Thr"/>
    <property type="match status" value="1"/>
</dbReference>
<dbReference type="InterPro" id="IPR011720">
    <property type="entry name" value="Thr_lead_pept"/>
</dbReference>
<dbReference type="NCBIfam" id="NF007329">
    <property type="entry name" value="PRK09816.1"/>
    <property type="match status" value="1"/>
</dbReference>
<dbReference type="NCBIfam" id="TIGR02077">
    <property type="entry name" value="thr_lead_pep"/>
    <property type="match status" value="1"/>
</dbReference>
<dbReference type="Pfam" id="PF08254">
    <property type="entry name" value="Leader_Thr"/>
    <property type="match status" value="1"/>
</dbReference>
<organism>
    <name type="scientific">Escherichia coli (strain K12)</name>
    <dbReference type="NCBI Taxonomy" id="83333"/>
    <lineage>
        <taxon>Bacteria</taxon>
        <taxon>Pseudomonadati</taxon>
        <taxon>Pseudomonadota</taxon>
        <taxon>Gammaproteobacteria</taxon>
        <taxon>Enterobacterales</taxon>
        <taxon>Enterobacteriaceae</taxon>
        <taxon>Escherichia</taxon>
    </lineage>
</organism>
<evidence type="ECO:0000255" key="1">
    <source>
        <dbReference type="HAMAP-Rule" id="MF_01907"/>
    </source>
</evidence>
<protein>
    <recommendedName>
        <fullName evidence="1">thr operon leader peptide</fullName>
    </recommendedName>
    <alternativeName>
        <fullName evidence="1">thr operon attenuator</fullName>
    </alternativeName>
</protein>
<reference key="1">
    <citation type="journal article" date="1979" name="Proc. Natl. Acad. Sci. U.S.A.">
        <title>Regulation of the threonine operon: tandem threonine and isoleucine codons in the control region and translational control of transcription termination.</title>
        <authorList>
            <person name="Gardner J.F."/>
        </authorList>
    </citation>
    <scope>NUCLEOTIDE SEQUENCE [GENOMIC DNA]</scope>
</reference>
<reference key="2">
    <citation type="journal article" date="1982" name="J. Biol. Chem.">
        <title>Initiation, pausing, and termination of transcription in the threonine operon regulatory region of Escherichia coli.</title>
        <authorList>
            <person name="Gardner J.F."/>
        </authorList>
    </citation>
    <scope>NUCLEOTIDE SEQUENCE [GENOMIC DNA]</scope>
</reference>
<reference key="3">
    <citation type="journal article" date="1985" name="J. Mol. Biol.">
        <title>Identification and characterization of mutants affecting transcription termination at the threonine operon attenuator.</title>
        <authorList>
            <person name="Lynn S.P."/>
            <person name="Bauer C.E."/>
            <person name="Chapman K.A."/>
            <person name="Gardner J.F."/>
        </authorList>
    </citation>
    <scope>NUCLEOTIDE SEQUENCE [GENOMIC DNA]</scope>
</reference>
<reference key="4">
    <citation type="journal article" date="1995" name="Nucleic Acids Res.">
        <title>Analysis of the Escherichia coli genome VI: DNA sequence of the region from 92.8 through 100 minutes.</title>
        <authorList>
            <person name="Burland V.D."/>
            <person name="Plunkett G. III"/>
            <person name="Sofia H.J."/>
            <person name="Daniels D.L."/>
            <person name="Blattner F.R."/>
        </authorList>
    </citation>
    <scope>NUCLEOTIDE SEQUENCE [LARGE SCALE GENOMIC DNA]</scope>
    <source>
        <strain>K12 / MG1655 / ATCC 47076</strain>
    </source>
</reference>
<reference key="5">
    <citation type="journal article" date="1997" name="Science">
        <title>The complete genome sequence of Escherichia coli K-12.</title>
        <authorList>
            <person name="Blattner F.R."/>
            <person name="Plunkett G. III"/>
            <person name="Bloch C.A."/>
            <person name="Perna N.T."/>
            <person name="Burland V."/>
            <person name="Riley M."/>
            <person name="Collado-Vides J."/>
            <person name="Glasner J.D."/>
            <person name="Rode C.K."/>
            <person name="Mayhew G.F."/>
            <person name="Gregor J."/>
            <person name="Davis N.W."/>
            <person name="Kirkpatrick H.A."/>
            <person name="Goeden M.A."/>
            <person name="Rose D.J."/>
            <person name="Mau B."/>
            <person name="Shao Y."/>
        </authorList>
    </citation>
    <scope>NUCLEOTIDE SEQUENCE [LARGE SCALE GENOMIC DNA]</scope>
    <source>
        <strain>K12 / MG1655 / ATCC 47076</strain>
    </source>
</reference>
<reference key="6">
    <citation type="journal article" date="2006" name="Mol. Syst. Biol.">
        <title>Highly accurate genome sequences of Escherichia coli K-12 strains MG1655 and W3110.</title>
        <authorList>
            <person name="Hayashi K."/>
            <person name="Morooka N."/>
            <person name="Yamamoto Y."/>
            <person name="Fujita K."/>
            <person name="Isono K."/>
            <person name="Choi S."/>
            <person name="Ohtsubo E."/>
            <person name="Baba T."/>
            <person name="Wanner B.L."/>
            <person name="Mori H."/>
            <person name="Horiuchi T."/>
        </authorList>
    </citation>
    <scope>NUCLEOTIDE SEQUENCE [LARGE SCALE GENOMIC DNA]</scope>
    <source>
        <strain>K12 / W3110 / ATCC 27325 / DSM 5911</strain>
    </source>
</reference>